<comment type="subunit">
    <text evidence="1 5">Interacts with NEDD4 (By similarity). Interacts (via cytoplasmic domain) with transcriptional coactivator YAP1 (PubMed:17502622).</text>
</comment>
<comment type="interaction">
    <interactant intactId="EBI-9824765">
        <id>O14669</id>
    </interactant>
    <interactant intactId="EBI-717962">
        <id>Q96PU5</id>
        <label>NEDD4L</label>
    </interactant>
    <organismsDiffer>false</organismsDiffer>
    <experiments>2</experiments>
</comment>
<comment type="interaction">
    <interactant intactId="EBI-9824765">
        <id>O14669</id>
    </interactant>
    <interactant intactId="EBI-1044059">
        <id>P46937</id>
        <label>YAP1</label>
    </interactant>
    <organismsDiffer>false</organismsDiffer>
    <experiments>5</experiments>
</comment>
<comment type="subcellular location">
    <subcellularLocation>
        <location evidence="5">Cell membrane</location>
        <topology evidence="2">Single-pass type I membrane protein</topology>
    </subcellularLocation>
</comment>
<comment type="tissue specificity">
    <text evidence="6 7">Widely expressed with highest levels in kidney (PubMed:23873930). Also highly expressed in the thyroid (PubMed:23873930, PubMed:9256434).</text>
</comment>
<comment type="PTM">
    <text evidence="3 5">Gamma-carboxyglutamate residues are formed by vitamin K dependent carboxylation. These residues are essential for the binding of calcium.</text>
</comment>
<name>TMG2_HUMAN</name>
<keyword id="KW-0002">3D-structure</keyword>
<keyword id="KW-1003">Cell membrane</keyword>
<keyword id="KW-1015">Disulfide bond</keyword>
<keyword id="KW-0301">Gamma-carboxyglutamic acid</keyword>
<keyword id="KW-0472">Membrane</keyword>
<keyword id="KW-1267">Proteomics identification</keyword>
<keyword id="KW-1185">Reference proteome</keyword>
<keyword id="KW-0732">Signal</keyword>
<keyword id="KW-0812">Transmembrane</keyword>
<keyword id="KW-1133">Transmembrane helix</keyword>
<protein>
    <recommendedName>
        <fullName>Transmembrane gamma-carboxyglutamic acid protein 2</fullName>
    </recommendedName>
    <alternativeName>
        <fullName>Proline-rich gamma-carboxyglutamic acid protein 2</fullName>
        <shortName>Proline-rich Gla protein 2</shortName>
    </alternativeName>
</protein>
<evidence type="ECO:0000250" key="1">
    <source>
        <dbReference type="UniProtKB" id="Q8R182"/>
    </source>
</evidence>
<evidence type="ECO:0000255" key="2"/>
<evidence type="ECO:0000255" key="3">
    <source>
        <dbReference type="PROSITE-ProRule" id="PRU00463"/>
    </source>
</evidence>
<evidence type="ECO:0000256" key="4">
    <source>
        <dbReference type="SAM" id="MobiDB-lite"/>
    </source>
</evidence>
<evidence type="ECO:0000269" key="5">
    <source>
    </source>
</evidence>
<evidence type="ECO:0000269" key="6">
    <source>
    </source>
</evidence>
<evidence type="ECO:0000269" key="7">
    <source>
    </source>
</evidence>
<evidence type="ECO:0000303" key="8">
    <source>
    </source>
</evidence>
<evidence type="ECO:0000312" key="9">
    <source>
        <dbReference type="HGNC" id="HGNC:9470"/>
    </source>
</evidence>
<reference key="1">
    <citation type="journal article" date="1997" name="Proc. Natl. Acad. Sci. U.S.A.">
        <title>Primary structure and tissue distribution of two novel proline-rich gamma-carboxyglutamic acid proteins.</title>
        <authorList>
            <person name="Kulman J.D."/>
            <person name="Harris J.E."/>
            <person name="Haldeman B.A."/>
            <person name="Davie E.W."/>
        </authorList>
    </citation>
    <scope>NUCLEOTIDE SEQUENCE [MRNA]</scope>
    <scope>TISSUE SPECIFICITY</scope>
</reference>
<reference key="2">
    <citation type="submission" date="2004-06" db="EMBL/GenBank/DDBJ databases">
        <title>Cloning of human full open reading frames in Gateway(TM) system entry vector (pDONR201).</title>
        <authorList>
            <person name="Ebert L."/>
            <person name="Schick M."/>
            <person name="Neubert P."/>
            <person name="Schatten R."/>
            <person name="Henze S."/>
            <person name="Korn B."/>
        </authorList>
    </citation>
    <scope>NUCLEOTIDE SEQUENCE [LARGE SCALE MRNA]</scope>
</reference>
<reference key="3">
    <citation type="journal article" date="2007" name="Proc. Natl. Acad. Sci. U.S.A.">
        <title>Proline-rich Gla protein 2 is a cell-surface vitamin K-dependent protein that binds to the transcriptional coactivator Yes-associated protein.</title>
        <authorList>
            <person name="Kulman J.D."/>
            <person name="Harris J.E."/>
            <person name="Xie L."/>
            <person name="Davie E.W."/>
        </authorList>
    </citation>
    <scope>INTERACTION WITH YAP1</scope>
    <scope>SUBCELLULAR LOCATION</scope>
    <scope>GAMMA-CARBOXYGLUTAMATION</scope>
    <scope>LPXY AND PPXY MOTIFS</scope>
    <scope>MUTAGENESIS OF PHE-31; ARG-49; PRO-173; GLY-174; LEU-175; PRO-176; THR-177; TYR-178; GLU-179; GLN-180 AND TYR-195</scope>
</reference>
<reference key="4">
    <citation type="journal article" date="2013" name="J. Biol. Chem.">
        <title>Cellular localization and characterization of cytosolic binding partners for Gla domain-containing proteins PRRG4 and PRRG2.</title>
        <authorList>
            <person name="Yazicioglu M.N."/>
            <person name="Monaldini L."/>
            <person name="Chu K."/>
            <person name="Khazi F.R."/>
            <person name="Murphy S.L."/>
            <person name="Huang H."/>
            <person name="Margaritis P."/>
            <person name="High K.A."/>
        </authorList>
    </citation>
    <scope>TISSUE SPECIFICITY</scope>
</reference>
<gene>
    <name evidence="9" type="primary">PRRG2</name>
    <name evidence="8" type="synonym">PRGP2</name>
    <name type="synonym">TMG2</name>
</gene>
<proteinExistence type="evidence at protein level"/>
<feature type="signal peptide" evidence="2">
    <location>
        <begin position="1"/>
        <end position="23"/>
    </location>
</feature>
<feature type="propeptide" id="PRO_0000022543">
    <location>
        <begin position="24"/>
        <end position="49"/>
    </location>
</feature>
<feature type="chain" id="PRO_0000022544" description="Transmembrane gamma-carboxyglutamic acid protein 2">
    <location>
        <begin position="50"/>
        <end position="202"/>
    </location>
</feature>
<feature type="topological domain" description="Extracellular" evidence="2">
    <location>
        <begin position="50"/>
        <end position="109"/>
    </location>
</feature>
<feature type="transmembrane region" description="Helical" evidence="2">
    <location>
        <begin position="110"/>
        <end position="130"/>
    </location>
</feature>
<feature type="topological domain" description="Cytoplasmic" evidence="2">
    <location>
        <begin position="131"/>
        <end position="202"/>
    </location>
</feature>
<feature type="domain" description="Gla" evidence="3">
    <location>
        <begin position="50"/>
        <end position="96"/>
    </location>
</feature>
<feature type="region of interest" description="Disordered" evidence="4">
    <location>
        <begin position="143"/>
        <end position="202"/>
    </location>
</feature>
<feature type="short sequence motif" description="LPXY motif; mediates binding to WW domain-containing proteins" evidence="5">
    <location>
        <begin position="175"/>
        <end position="178"/>
    </location>
</feature>
<feature type="short sequence motif" description="PPXY motif; mediates binding to WW domain-containing proteins" evidence="5">
    <location>
        <begin position="192"/>
        <end position="195"/>
    </location>
</feature>
<feature type="compositionally biased region" description="Pro residues" evidence="4">
    <location>
        <begin position="158"/>
        <end position="175"/>
    </location>
</feature>
<feature type="modified residue" description="4-carboxyglutamate" evidence="3">
    <location>
        <position position="70"/>
    </location>
</feature>
<feature type="disulfide bond" evidence="3">
    <location>
        <begin position="67"/>
        <end position="72"/>
    </location>
</feature>
<feature type="sequence variant" id="VAR_051442" description="In dbSNP:rs35016366.">
    <original>P</original>
    <variation>S</variation>
    <location>
        <position position="22"/>
    </location>
</feature>
<feature type="sequence variant" id="VAR_020332" description="In dbSNP:rs2288920.">
    <original>G</original>
    <variation>C</variation>
    <location>
        <position position="116"/>
    </location>
</feature>
<feature type="mutagenesis site" description="Abolishes gamma-carboxylation." evidence="5">
    <original>F</original>
    <variation>A</variation>
    <location>
        <position position="31"/>
    </location>
</feature>
<feature type="mutagenesis site" description="Impairs propeptide removal." evidence="5">
    <original>R</original>
    <variation>A</variation>
    <location>
        <position position="49"/>
    </location>
</feature>
<feature type="mutagenesis site" description="No effect on interaction with YAP1." evidence="5">
    <original>P</original>
    <variation>A</variation>
    <location>
        <position position="173"/>
    </location>
</feature>
<feature type="mutagenesis site" description="No effect on interaction with YAP1." evidence="5">
    <original>G</original>
    <variation>A</variation>
    <location>
        <position position="174"/>
    </location>
</feature>
<feature type="mutagenesis site" description="Abolishes interaction with YAP1." evidence="5">
    <original>L</original>
    <variation>A</variation>
    <location>
        <position position="175"/>
    </location>
</feature>
<feature type="mutagenesis site" description="Abolishes interaction with YAP1." evidence="5">
    <original>P</original>
    <variation>A</variation>
    <location>
        <position position="176"/>
    </location>
</feature>
<feature type="mutagenesis site" description="Abolishes interaction with YAP1." evidence="5">
    <original>T</original>
    <variation>A</variation>
    <location>
        <position position="177"/>
    </location>
</feature>
<feature type="mutagenesis site" description="Abolishes interaction with YAP1." evidence="5">
    <original>Y</original>
    <variation>A</variation>
    <location>
        <position position="178"/>
    </location>
</feature>
<feature type="mutagenesis site" description="Significantly impairs interaction with YAP1." evidence="5">
    <original>E</original>
    <variation>A</variation>
    <location>
        <position position="179"/>
    </location>
</feature>
<feature type="mutagenesis site" description="Significantly impairs interaction with YAP1." evidence="5">
    <original>Q</original>
    <variation>A</variation>
    <location>
        <position position="180"/>
    </location>
</feature>
<feature type="mutagenesis site" description="Significantly impairs interaction with YAP1." evidence="5">
    <original>Y</original>
    <variation>A</variation>
    <location>
        <position position="195"/>
    </location>
</feature>
<sequence>MRGHPSLLLLYMALTTCLDTSPSEETDQEVFLGPPEAQSFLSSHTRIPRANHWDLELLTPGNLERECLEERCSWEEAREYFEDNTLTERFWESYIYNGKGGRGRVDVASLAVGLTGGILLIVLAGLGAFWYLRWRQHRGQQPCPQEAGLISPLSPLNPLGPPTPLPPPPPPPPGLPTYEQALAASGVHDAPPPPYTSLRRPH</sequence>
<accession>O14669</accession>
<accession>Q6IBF8</accession>
<dbReference type="EMBL" id="AF009243">
    <property type="protein sequence ID" value="AAB67071.1"/>
    <property type="molecule type" value="mRNA"/>
</dbReference>
<dbReference type="EMBL" id="CR456846">
    <property type="protein sequence ID" value="CAG33127.1"/>
    <property type="molecule type" value="mRNA"/>
</dbReference>
<dbReference type="CCDS" id="CCDS12773.1"/>
<dbReference type="RefSeq" id="NP_000942.1">
    <property type="nucleotide sequence ID" value="NM_000951.3"/>
</dbReference>
<dbReference type="RefSeq" id="XP_006723349.1">
    <property type="nucleotide sequence ID" value="XM_006723286.2"/>
</dbReference>
<dbReference type="PDB" id="9BVP">
    <property type="method" value="EM"/>
    <property type="resolution" value="3.30 A"/>
    <property type="chains" value="P=24-139"/>
</dbReference>
<dbReference type="PDB" id="9BVQ">
    <property type="method" value="EM"/>
    <property type="resolution" value="3.30 A"/>
    <property type="chains" value="P=24-139"/>
</dbReference>
<dbReference type="PDBsum" id="9BVP"/>
<dbReference type="PDBsum" id="9BVQ"/>
<dbReference type="EMDB" id="EMD-44940"/>
<dbReference type="EMDB" id="EMD-44941"/>
<dbReference type="SMR" id="O14669"/>
<dbReference type="BioGRID" id="111622">
    <property type="interactions" value="9"/>
</dbReference>
<dbReference type="DIP" id="DIP-60947N"/>
<dbReference type="FunCoup" id="O14669">
    <property type="interactions" value="134"/>
</dbReference>
<dbReference type="IntAct" id="O14669">
    <property type="interactions" value="5"/>
</dbReference>
<dbReference type="MINT" id="O14669"/>
<dbReference type="STRING" id="9606.ENSP00000246794"/>
<dbReference type="iPTMnet" id="O14669"/>
<dbReference type="PhosphoSitePlus" id="O14669"/>
<dbReference type="BioMuta" id="PRRG2"/>
<dbReference type="MassIVE" id="O14669"/>
<dbReference type="PaxDb" id="9606-ENSP00000246794"/>
<dbReference type="PeptideAtlas" id="O14669"/>
<dbReference type="Antibodypedia" id="2418">
    <property type="antibodies" value="69 antibodies from 25 providers"/>
</dbReference>
<dbReference type="DNASU" id="5639"/>
<dbReference type="Ensembl" id="ENST00000246794.10">
    <property type="protein sequence ID" value="ENSP00000246794.4"/>
    <property type="gene ID" value="ENSG00000126460.11"/>
</dbReference>
<dbReference type="GeneID" id="5639"/>
<dbReference type="KEGG" id="hsa:5639"/>
<dbReference type="MANE-Select" id="ENST00000246794.10">
    <property type="protein sequence ID" value="ENSP00000246794.4"/>
    <property type="RefSeq nucleotide sequence ID" value="NM_000951.3"/>
    <property type="RefSeq protein sequence ID" value="NP_000942.1"/>
</dbReference>
<dbReference type="UCSC" id="uc002pon.4">
    <property type="organism name" value="human"/>
</dbReference>
<dbReference type="AGR" id="HGNC:9470"/>
<dbReference type="CTD" id="5639"/>
<dbReference type="DisGeNET" id="5639"/>
<dbReference type="GeneCards" id="PRRG2"/>
<dbReference type="HGNC" id="HGNC:9470">
    <property type="gene designation" value="PRRG2"/>
</dbReference>
<dbReference type="HPA" id="ENSG00000126460">
    <property type="expression patterns" value="Tissue enhanced (parathyroid)"/>
</dbReference>
<dbReference type="MIM" id="604429">
    <property type="type" value="gene"/>
</dbReference>
<dbReference type="neXtProt" id="NX_O14669"/>
<dbReference type="OpenTargets" id="ENSG00000126460"/>
<dbReference type="PharmGKB" id="PA33825"/>
<dbReference type="VEuPathDB" id="HostDB:ENSG00000126460"/>
<dbReference type="eggNOG" id="ENOG502RZZF">
    <property type="taxonomic scope" value="Eukaryota"/>
</dbReference>
<dbReference type="GeneTree" id="ENSGT00950000183084"/>
<dbReference type="HOGENOM" id="CLU_084796_1_0_1"/>
<dbReference type="InParanoid" id="O14669"/>
<dbReference type="OMA" id="IYCYKAK"/>
<dbReference type="OrthoDB" id="9379732at2759"/>
<dbReference type="PAN-GO" id="O14669">
    <property type="GO annotations" value="1 GO annotation based on evolutionary models"/>
</dbReference>
<dbReference type="PhylomeDB" id="O14669"/>
<dbReference type="TreeFam" id="TF332123"/>
<dbReference type="PathwayCommons" id="O14669"/>
<dbReference type="SignaLink" id="O14669"/>
<dbReference type="BioGRID-ORCS" id="5639">
    <property type="hits" value="12 hits in 1150 CRISPR screens"/>
</dbReference>
<dbReference type="ChiTaRS" id="PRRG2">
    <property type="organism name" value="human"/>
</dbReference>
<dbReference type="GenomeRNAi" id="5639"/>
<dbReference type="Pharos" id="O14669">
    <property type="development level" value="Tbio"/>
</dbReference>
<dbReference type="PRO" id="PR:O14669"/>
<dbReference type="Proteomes" id="UP000005640">
    <property type="component" value="Chromosome 19"/>
</dbReference>
<dbReference type="RNAct" id="O14669">
    <property type="molecule type" value="protein"/>
</dbReference>
<dbReference type="Bgee" id="ENSG00000126460">
    <property type="expression patterns" value="Expressed in lower esophagus mucosa and 105 other cell types or tissues"/>
</dbReference>
<dbReference type="ExpressionAtlas" id="O14669">
    <property type="expression patterns" value="baseline and differential"/>
</dbReference>
<dbReference type="GO" id="GO:0005615">
    <property type="term" value="C:extracellular space"/>
    <property type="evidence" value="ECO:0000318"/>
    <property type="project" value="GO_Central"/>
</dbReference>
<dbReference type="GO" id="GO:0005886">
    <property type="term" value="C:plasma membrane"/>
    <property type="evidence" value="ECO:0000314"/>
    <property type="project" value="UniProtKB"/>
</dbReference>
<dbReference type="GO" id="GO:0005509">
    <property type="term" value="F:calcium ion binding"/>
    <property type="evidence" value="ECO:0007669"/>
    <property type="project" value="InterPro"/>
</dbReference>
<dbReference type="GO" id="GO:0004252">
    <property type="term" value="F:serine-type endopeptidase activity"/>
    <property type="evidence" value="ECO:0000318"/>
    <property type="project" value="GO_Central"/>
</dbReference>
<dbReference type="GO" id="GO:0007596">
    <property type="term" value="P:blood coagulation"/>
    <property type="evidence" value="ECO:0000318"/>
    <property type="project" value="GO_Central"/>
</dbReference>
<dbReference type="CDD" id="cd12087">
    <property type="entry name" value="TM_EGFR-like"/>
    <property type="match status" value="1"/>
</dbReference>
<dbReference type="FunFam" id="4.10.740.10:FF:000001">
    <property type="entry name" value="vitamin K-dependent protein S"/>
    <property type="match status" value="1"/>
</dbReference>
<dbReference type="Gene3D" id="4.10.740.10">
    <property type="entry name" value="Coagulation Factor IX"/>
    <property type="match status" value="1"/>
</dbReference>
<dbReference type="InterPro" id="IPR017857">
    <property type="entry name" value="Coagulation_fac-like_Gla_dom"/>
</dbReference>
<dbReference type="InterPro" id="IPR035972">
    <property type="entry name" value="GLA-like_dom_SF"/>
</dbReference>
<dbReference type="InterPro" id="IPR000294">
    <property type="entry name" value="GLA_domain"/>
</dbReference>
<dbReference type="InterPro" id="IPR050442">
    <property type="entry name" value="Peptidase_S1_coag_factors"/>
</dbReference>
<dbReference type="PANTHER" id="PTHR24278">
    <property type="entry name" value="COAGULATION FACTOR"/>
    <property type="match status" value="1"/>
</dbReference>
<dbReference type="PANTHER" id="PTHR24278:SF30">
    <property type="entry name" value="TRANSMEMBRANE GAMMA-CARBOXYGLUTAMIC ACID PROTEIN 2"/>
    <property type="match status" value="1"/>
</dbReference>
<dbReference type="Pfam" id="PF00594">
    <property type="entry name" value="Gla"/>
    <property type="match status" value="1"/>
</dbReference>
<dbReference type="PRINTS" id="PR00001">
    <property type="entry name" value="GLABLOOD"/>
</dbReference>
<dbReference type="SMART" id="SM00069">
    <property type="entry name" value="GLA"/>
    <property type="match status" value="1"/>
</dbReference>
<dbReference type="SUPFAM" id="SSF57630">
    <property type="entry name" value="GLA-domain"/>
    <property type="match status" value="1"/>
</dbReference>
<dbReference type="PROSITE" id="PS00011">
    <property type="entry name" value="GLA_1"/>
    <property type="match status" value="1"/>
</dbReference>
<dbReference type="PROSITE" id="PS50998">
    <property type="entry name" value="GLA_2"/>
    <property type="match status" value="1"/>
</dbReference>
<organism>
    <name type="scientific">Homo sapiens</name>
    <name type="common">Human</name>
    <dbReference type="NCBI Taxonomy" id="9606"/>
    <lineage>
        <taxon>Eukaryota</taxon>
        <taxon>Metazoa</taxon>
        <taxon>Chordata</taxon>
        <taxon>Craniata</taxon>
        <taxon>Vertebrata</taxon>
        <taxon>Euteleostomi</taxon>
        <taxon>Mammalia</taxon>
        <taxon>Eutheria</taxon>
        <taxon>Euarchontoglires</taxon>
        <taxon>Primates</taxon>
        <taxon>Haplorrhini</taxon>
        <taxon>Catarrhini</taxon>
        <taxon>Hominidae</taxon>
        <taxon>Homo</taxon>
    </lineage>
</organism>